<accession>P0CC42</accession>
<accession>A8SEE8</accession>
<proteinExistence type="inferred from homology"/>
<geneLocation type="chloroplast"/>
<sequence>MIWHVQNENFILDSTRIFMKAFHLLLFHGSFILPECILIFGLILLLMIDSTSDQKDIPWLYFISSTSLVMSITALLFRWKEEPMISFSGNFQTNNFNEIFQFLILLCSTLCIPLSVEYIECTEMAITEFLLFVLTATLGGMFLCGANDSITIFVAPECFSLCSYLLSGYTKRDVRSNEATTKYLLMGGASSSILVHGFSWLYGSSGGEIELQEIVNGLINTQMYNSPGISIALIFITVGIGFKLSPAPFHQWTPDVYEGSPTPVVAFLSVTSKVAASASATRIFDIPFYFSSNEWHLLLEILAILSMILGNLVAITQTSMKRMLAYSSIGQIGYVIIGIIVGDSNDGYASMITYMLFYISMNLGTFARIVSFGLRTGTDNIRDYAGLYTKDPFLALSSALCLLSLGGLPPLAGFFGKLHLFWCGWQAGLYFLVSIGLLTSVVSIYYYLKIIKLLMTGRNQEITPHVRNYRRSPLRSNNSIELSMIVCVIASTIPGISMNPIIAIAQDTLF</sequence>
<organism>
    <name type="scientific">Ceratophyllum demersum</name>
    <name type="common">Rigid hornwort</name>
    <name type="synonym">Coontail</name>
    <dbReference type="NCBI Taxonomy" id="4428"/>
    <lineage>
        <taxon>Eukaryota</taxon>
        <taxon>Viridiplantae</taxon>
        <taxon>Streptophyta</taxon>
        <taxon>Embryophyta</taxon>
        <taxon>Tracheophyta</taxon>
        <taxon>Spermatophyta</taxon>
        <taxon>Magnoliopsida</taxon>
        <taxon>Ceratophyllales</taxon>
        <taxon>Ceratophyllaceae</taxon>
        <taxon>Ceratophyllum</taxon>
    </lineage>
</organism>
<keyword id="KW-0150">Chloroplast</keyword>
<keyword id="KW-0472">Membrane</keyword>
<keyword id="KW-0520">NAD</keyword>
<keyword id="KW-0521">NADP</keyword>
<keyword id="KW-0934">Plastid</keyword>
<keyword id="KW-0618">Plastoquinone</keyword>
<keyword id="KW-0874">Quinone</keyword>
<keyword id="KW-0793">Thylakoid</keyword>
<keyword id="KW-1278">Translocase</keyword>
<keyword id="KW-0812">Transmembrane</keyword>
<keyword id="KW-1133">Transmembrane helix</keyword>
<keyword id="KW-0813">Transport</keyword>
<reference key="1">
    <citation type="journal article" date="2007" name="Proc. Natl. Acad. Sci. U.S.A.">
        <title>Using plastid genome-scale data to resolve enigmatic relationships among basal angiosperms.</title>
        <authorList>
            <person name="Moore M.J."/>
            <person name="Bell C.D."/>
            <person name="Soltis P.S."/>
            <person name="Soltis D.E."/>
        </authorList>
    </citation>
    <scope>NUCLEOTIDE SEQUENCE [LARGE SCALE GENOMIC DNA]</scope>
</reference>
<gene>
    <name evidence="1" type="primary">ndhB1</name>
</gene>
<evidence type="ECO:0000255" key="1">
    <source>
        <dbReference type="HAMAP-Rule" id="MF_00445"/>
    </source>
</evidence>
<comment type="function">
    <text evidence="1">NDH shuttles electrons from NAD(P)H:plastoquinone, via FMN and iron-sulfur (Fe-S) centers, to quinones in the photosynthetic chain and possibly in a chloroplast respiratory chain. The immediate electron acceptor for the enzyme in this species is believed to be plastoquinone. Couples the redox reaction to proton translocation, and thus conserves the redox energy in a proton gradient.</text>
</comment>
<comment type="catalytic activity">
    <reaction evidence="1">
        <text>a plastoquinone + NADH + (n+1) H(+)(in) = a plastoquinol + NAD(+) + n H(+)(out)</text>
        <dbReference type="Rhea" id="RHEA:42608"/>
        <dbReference type="Rhea" id="RHEA-COMP:9561"/>
        <dbReference type="Rhea" id="RHEA-COMP:9562"/>
        <dbReference type="ChEBI" id="CHEBI:15378"/>
        <dbReference type="ChEBI" id="CHEBI:17757"/>
        <dbReference type="ChEBI" id="CHEBI:57540"/>
        <dbReference type="ChEBI" id="CHEBI:57945"/>
        <dbReference type="ChEBI" id="CHEBI:62192"/>
    </reaction>
</comment>
<comment type="catalytic activity">
    <reaction evidence="1">
        <text>a plastoquinone + NADPH + (n+1) H(+)(in) = a plastoquinol + NADP(+) + n H(+)(out)</text>
        <dbReference type="Rhea" id="RHEA:42612"/>
        <dbReference type="Rhea" id="RHEA-COMP:9561"/>
        <dbReference type="Rhea" id="RHEA-COMP:9562"/>
        <dbReference type="ChEBI" id="CHEBI:15378"/>
        <dbReference type="ChEBI" id="CHEBI:17757"/>
        <dbReference type="ChEBI" id="CHEBI:57783"/>
        <dbReference type="ChEBI" id="CHEBI:58349"/>
        <dbReference type="ChEBI" id="CHEBI:62192"/>
    </reaction>
</comment>
<comment type="subunit">
    <text evidence="1">NDH is composed of at least 16 different subunits, 5 of which are encoded in the nucleus.</text>
</comment>
<comment type="subcellular location">
    <subcellularLocation>
        <location evidence="1">Plastid</location>
        <location evidence="1">Chloroplast thylakoid membrane</location>
        <topology evidence="1">Multi-pass membrane protein</topology>
    </subcellularLocation>
</comment>
<comment type="similarity">
    <text evidence="1">Belongs to the complex I subunit 2 family.</text>
</comment>
<dbReference type="EC" id="7.1.1.-" evidence="1"/>
<dbReference type="EMBL" id="EF614270">
    <property type="protein sequence ID" value="ABQ81496.1"/>
    <property type="molecule type" value="Genomic_DNA"/>
</dbReference>
<dbReference type="SMR" id="P0CC42"/>
<dbReference type="GO" id="GO:0009535">
    <property type="term" value="C:chloroplast thylakoid membrane"/>
    <property type="evidence" value="ECO:0007669"/>
    <property type="project" value="UniProtKB-SubCell"/>
</dbReference>
<dbReference type="GO" id="GO:0008137">
    <property type="term" value="F:NADH dehydrogenase (ubiquinone) activity"/>
    <property type="evidence" value="ECO:0007669"/>
    <property type="project" value="InterPro"/>
</dbReference>
<dbReference type="GO" id="GO:0048038">
    <property type="term" value="F:quinone binding"/>
    <property type="evidence" value="ECO:0007669"/>
    <property type="project" value="UniProtKB-KW"/>
</dbReference>
<dbReference type="GO" id="GO:0042773">
    <property type="term" value="P:ATP synthesis coupled electron transport"/>
    <property type="evidence" value="ECO:0007669"/>
    <property type="project" value="InterPro"/>
</dbReference>
<dbReference type="GO" id="GO:0019684">
    <property type="term" value="P:photosynthesis, light reaction"/>
    <property type="evidence" value="ECO:0007669"/>
    <property type="project" value="UniProtKB-UniRule"/>
</dbReference>
<dbReference type="HAMAP" id="MF_00445">
    <property type="entry name" value="NDH1_NuoN_1"/>
    <property type="match status" value="1"/>
</dbReference>
<dbReference type="InterPro" id="IPR010096">
    <property type="entry name" value="NADH-Q_OxRdtase_suN/2"/>
</dbReference>
<dbReference type="InterPro" id="IPR001750">
    <property type="entry name" value="ND/Mrp_TM"/>
</dbReference>
<dbReference type="InterPro" id="IPR045693">
    <property type="entry name" value="Ndh2_N"/>
</dbReference>
<dbReference type="NCBIfam" id="TIGR01770">
    <property type="entry name" value="NDH_I_N"/>
    <property type="match status" value="1"/>
</dbReference>
<dbReference type="NCBIfam" id="NF002701">
    <property type="entry name" value="PRK02504.1"/>
    <property type="match status" value="1"/>
</dbReference>
<dbReference type="PANTHER" id="PTHR22773">
    <property type="entry name" value="NADH DEHYDROGENASE"/>
    <property type="match status" value="1"/>
</dbReference>
<dbReference type="Pfam" id="PF19530">
    <property type="entry name" value="Ndh2_N"/>
    <property type="match status" value="1"/>
</dbReference>
<dbReference type="Pfam" id="PF00361">
    <property type="entry name" value="Proton_antipo_M"/>
    <property type="match status" value="1"/>
</dbReference>
<dbReference type="PRINTS" id="PR01434">
    <property type="entry name" value="NADHDHGNASE5"/>
</dbReference>
<name>NU2C1_CERDE</name>
<feature type="chain" id="PRO_0000344262" description="NAD(P)H-quinone oxidoreductase subunit 2 A, chloroplastic">
    <location>
        <begin position="1"/>
        <end position="510"/>
    </location>
</feature>
<feature type="transmembrane region" description="Helical" evidence="1">
    <location>
        <begin position="24"/>
        <end position="44"/>
    </location>
</feature>
<feature type="transmembrane region" description="Helical" evidence="1">
    <location>
        <begin position="57"/>
        <end position="77"/>
    </location>
</feature>
<feature type="transmembrane region" description="Helical" evidence="1">
    <location>
        <begin position="99"/>
        <end position="119"/>
    </location>
</feature>
<feature type="transmembrane region" description="Helical" evidence="1">
    <location>
        <begin position="124"/>
        <end position="144"/>
    </location>
</feature>
<feature type="transmembrane region" description="Helical" evidence="1">
    <location>
        <begin position="150"/>
        <end position="170"/>
    </location>
</feature>
<feature type="transmembrane region" description="Helical" evidence="1">
    <location>
        <begin position="183"/>
        <end position="203"/>
    </location>
</feature>
<feature type="transmembrane region" description="Helical" evidence="1">
    <location>
        <begin position="229"/>
        <end position="249"/>
    </location>
</feature>
<feature type="transmembrane region" description="Helical" evidence="1">
    <location>
        <begin position="295"/>
        <end position="315"/>
    </location>
</feature>
<feature type="transmembrane region" description="Helical" evidence="1">
    <location>
        <begin position="323"/>
        <end position="343"/>
    </location>
</feature>
<feature type="transmembrane region" description="Helical" evidence="1">
    <location>
        <begin position="347"/>
        <end position="367"/>
    </location>
</feature>
<feature type="transmembrane region" description="Helical" evidence="1">
    <location>
        <begin position="395"/>
        <end position="415"/>
    </location>
</feature>
<feature type="transmembrane region" description="Helical" evidence="1">
    <location>
        <begin position="418"/>
        <end position="438"/>
    </location>
</feature>
<feature type="transmembrane region" description="Helical" evidence="1">
    <location>
        <begin position="484"/>
        <end position="504"/>
    </location>
</feature>
<protein>
    <recommendedName>
        <fullName evidence="1">NAD(P)H-quinone oxidoreductase subunit 2 A, chloroplastic</fullName>
        <ecNumber evidence="1">7.1.1.-</ecNumber>
    </recommendedName>
    <alternativeName>
        <fullName evidence="1">NAD(P)H dehydrogenase, subunit 2 A</fullName>
    </alternativeName>
    <alternativeName>
        <fullName evidence="1">NADH-plastoquinone oxidoreductase subunit 2 A</fullName>
    </alternativeName>
</protein>